<gene>
    <name evidence="1" type="primary">rpsS</name>
    <name type="ordered locus">Mnod_1912</name>
</gene>
<reference key="1">
    <citation type="submission" date="2009-01" db="EMBL/GenBank/DDBJ databases">
        <title>Complete sequence of chromosome of Methylobacterium nodulans ORS 2060.</title>
        <authorList>
            <consortium name="US DOE Joint Genome Institute"/>
            <person name="Lucas S."/>
            <person name="Copeland A."/>
            <person name="Lapidus A."/>
            <person name="Glavina del Rio T."/>
            <person name="Dalin E."/>
            <person name="Tice H."/>
            <person name="Bruce D."/>
            <person name="Goodwin L."/>
            <person name="Pitluck S."/>
            <person name="Sims D."/>
            <person name="Brettin T."/>
            <person name="Detter J.C."/>
            <person name="Han C."/>
            <person name="Larimer F."/>
            <person name="Land M."/>
            <person name="Hauser L."/>
            <person name="Kyrpides N."/>
            <person name="Ivanova N."/>
            <person name="Marx C.J."/>
            <person name="Richardson P."/>
        </authorList>
    </citation>
    <scope>NUCLEOTIDE SEQUENCE [LARGE SCALE GENOMIC DNA]</scope>
    <source>
        <strain>LMG 21967 / CNCM I-2342 / ORS 2060</strain>
    </source>
</reference>
<dbReference type="EMBL" id="CP001349">
    <property type="protein sequence ID" value="ACL56901.1"/>
    <property type="molecule type" value="Genomic_DNA"/>
</dbReference>
<dbReference type="RefSeq" id="WP_015928590.1">
    <property type="nucleotide sequence ID" value="NC_011894.1"/>
</dbReference>
<dbReference type="SMR" id="B8IS89"/>
<dbReference type="STRING" id="460265.Mnod_1912"/>
<dbReference type="KEGG" id="mno:Mnod_1912"/>
<dbReference type="eggNOG" id="COG0185">
    <property type="taxonomic scope" value="Bacteria"/>
</dbReference>
<dbReference type="HOGENOM" id="CLU_144911_0_1_5"/>
<dbReference type="OrthoDB" id="9797833at2"/>
<dbReference type="Proteomes" id="UP000008207">
    <property type="component" value="Chromosome"/>
</dbReference>
<dbReference type="GO" id="GO:0005737">
    <property type="term" value="C:cytoplasm"/>
    <property type="evidence" value="ECO:0007669"/>
    <property type="project" value="UniProtKB-ARBA"/>
</dbReference>
<dbReference type="GO" id="GO:0015935">
    <property type="term" value="C:small ribosomal subunit"/>
    <property type="evidence" value="ECO:0007669"/>
    <property type="project" value="InterPro"/>
</dbReference>
<dbReference type="GO" id="GO:0019843">
    <property type="term" value="F:rRNA binding"/>
    <property type="evidence" value="ECO:0007669"/>
    <property type="project" value="UniProtKB-UniRule"/>
</dbReference>
<dbReference type="GO" id="GO:0003735">
    <property type="term" value="F:structural constituent of ribosome"/>
    <property type="evidence" value="ECO:0007669"/>
    <property type="project" value="InterPro"/>
</dbReference>
<dbReference type="GO" id="GO:0000028">
    <property type="term" value="P:ribosomal small subunit assembly"/>
    <property type="evidence" value="ECO:0007669"/>
    <property type="project" value="TreeGrafter"/>
</dbReference>
<dbReference type="GO" id="GO:0006412">
    <property type="term" value="P:translation"/>
    <property type="evidence" value="ECO:0007669"/>
    <property type="project" value="UniProtKB-UniRule"/>
</dbReference>
<dbReference type="FunFam" id="3.30.860.10:FF:000001">
    <property type="entry name" value="30S ribosomal protein S19"/>
    <property type="match status" value="1"/>
</dbReference>
<dbReference type="Gene3D" id="3.30.860.10">
    <property type="entry name" value="30s Ribosomal Protein S19, Chain A"/>
    <property type="match status" value="1"/>
</dbReference>
<dbReference type="HAMAP" id="MF_00531">
    <property type="entry name" value="Ribosomal_uS19"/>
    <property type="match status" value="1"/>
</dbReference>
<dbReference type="InterPro" id="IPR002222">
    <property type="entry name" value="Ribosomal_uS19"/>
</dbReference>
<dbReference type="InterPro" id="IPR005732">
    <property type="entry name" value="Ribosomal_uS19_bac-type"/>
</dbReference>
<dbReference type="InterPro" id="IPR020934">
    <property type="entry name" value="Ribosomal_uS19_CS"/>
</dbReference>
<dbReference type="InterPro" id="IPR023575">
    <property type="entry name" value="Ribosomal_uS19_SF"/>
</dbReference>
<dbReference type="NCBIfam" id="TIGR01050">
    <property type="entry name" value="rpsS_bact"/>
    <property type="match status" value="1"/>
</dbReference>
<dbReference type="PANTHER" id="PTHR11880">
    <property type="entry name" value="RIBOSOMAL PROTEIN S19P FAMILY MEMBER"/>
    <property type="match status" value="1"/>
</dbReference>
<dbReference type="PANTHER" id="PTHR11880:SF8">
    <property type="entry name" value="SMALL RIBOSOMAL SUBUNIT PROTEIN US19M"/>
    <property type="match status" value="1"/>
</dbReference>
<dbReference type="Pfam" id="PF00203">
    <property type="entry name" value="Ribosomal_S19"/>
    <property type="match status" value="1"/>
</dbReference>
<dbReference type="PIRSF" id="PIRSF002144">
    <property type="entry name" value="Ribosomal_S19"/>
    <property type="match status" value="1"/>
</dbReference>
<dbReference type="PRINTS" id="PR00975">
    <property type="entry name" value="RIBOSOMALS19"/>
</dbReference>
<dbReference type="SUPFAM" id="SSF54570">
    <property type="entry name" value="Ribosomal protein S19"/>
    <property type="match status" value="1"/>
</dbReference>
<dbReference type="PROSITE" id="PS00323">
    <property type="entry name" value="RIBOSOMAL_S19"/>
    <property type="match status" value="1"/>
</dbReference>
<keyword id="KW-1185">Reference proteome</keyword>
<keyword id="KW-0687">Ribonucleoprotein</keyword>
<keyword id="KW-0689">Ribosomal protein</keyword>
<keyword id="KW-0694">RNA-binding</keyword>
<keyword id="KW-0699">rRNA-binding</keyword>
<protein>
    <recommendedName>
        <fullName evidence="1">Small ribosomal subunit protein uS19</fullName>
    </recommendedName>
    <alternativeName>
        <fullName evidence="2">30S ribosomal protein S19</fullName>
    </alternativeName>
</protein>
<comment type="function">
    <text evidence="1">Protein S19 forms a complex with S13 that binds strongly to the 16S ribosomal RNA.</text>
</comment>
<comment type="similarity">
    <text evidence="1">Belongs to the universal ribosomal protein uS19 family.</text>
</comment>
<proteinExistence type="inferred from homology"/>
<organism>
    <name type="scientific">Methylobacterium nodulans (strain LMG 21967 / CNCM I-2342 / ORS 2060)</name>
    <dbReference type="NCBI Taxonomy" id="460265"/>
    <lineage>
        <taxon>Bacteria</taxon>
        <taxon>Pseudomonadati</taxon>
        <taxon>Pseudomonadota</taxon>
        <taxon>Alphaproteobacteria</taxon>
        <taxon>Hyphomicrobiales</taxon>
        <taxon>Methylobacteriaceae</taxon>
        <taxon>Methylobacterium</taxon>
    </lineage>
</organism>
<feature type="chain" id="PRO_1000146400" description="Small ribosomal subunit protein uS19">
    <location>
        <begin position="1"/>
        <end position="92"/>
    </location>
</feature>
<accession>B8IS89</accession>
<evidence type="ECO:0000255" key="1">
    <source>
        <dbReference type="HAMAP-Rule" id="MF_00531"/>
    </source>
</evidence>
<evidence type="ECO:0000305" key="2"/>
<sequence length="92" mass="10436">MARSVWKGPFVDGYLLKKAEAARGSTRSEVIKIWSRRSTILPQFVGLTFGVYNGQKHIPVYVSEEMVGHKFGEFSPTRTFHGHAADKKAKRR</sequence>
<name>RS19_METNO</name>